<accession>Q8SQP2</accession>
<comment type="function">
    <text evidence="1">Molecular chaperone; assists the folding of proteins upon ATP hydrolysis.</text>
</comment>
<comment type="subunit">
    <text evidence="1">Component of the T-complex protein 1 (TCP1) complex.</text>
</comment>
<comment type="subcellular location">
    <subcellularLocation>
        <location evidence="1">Cytoplasm</location>
    </subcellularLocation>
</comment>
<comment type="developmental stage">
    <text evidence="2">Expressed in late sporogonial stages.</text>
</comment>
<comment type="similarity">
    <text evidence="3">Belongs to the TCP-1 chaperonin family.</text>
</comment>
<proteinExistence type="evidence at protein level"/>
<protein>
    <recommendedName>
        <fullName>T-complex protein 1 subunit beta</fullName>
        <shortName>TCP-1-beta</shortName>
    </recommendedName>
    <alternativeName>
        <fullName>CCT-beta</fullName>
    </alternativeName>
</protein>
<evidence type="ECO:0000250" key="1"/>
<evidence type="ECO:0000269" key="2">
    <source>
    </source>
</evidence>
<evidence type="ECO:0000305" key="3"/>
<name>TCPB_ENCCU</name>
<sequence>MNIFSHANLGTTEERGDDAKRTILAGTDIVGDILKTTLGPKGMLKMLKGQHVNVTNDGAFILNNLMIDSPSARILIGSSTGQDWEEGDGTTSVAILASLLVKEAGKLEMHPTKILRGYRMAQAKCEEILSSISFEATKEDLLKLVRTTLCSKVLRYDLERFCEICVNAVEKLEGRNDLNLIQIIKCSGKLEDSYLDDGFLLKKDIRIDDVVNPRVLIANTSMDQDKIKVFGAKINVNSVGELEEMEKAEKIKIKGKVERISQNGVNVFVNRQLVYDYPLQLLRMKGIQAIEHADFDGVERLNNVLGGKILSTFDNMDESCYGTCESIRNVHVGNERMIKFSGVRSGASTIVLCGSSKEMLDEAERSVHDALCVLAKIKEDPRVIYGGGSSEMAMAVGLNKYAMEVPGAESDAILAFSSALQQIPKILADNGGYNGESIKASLRAEHNSGRTSYGVNVRNGSIGCMKEAGVVDSLRIKHRVVTAASETAQMIIKCDAIVKCKPRERTRE</sequence>
<dbReference type="EMBL" id="AL590451">
    <property type="protein sequence ID" value="CAD27020.1"/>
    <property type="molecule type" value="Genomic_DNA"/>
</dbReference>
<dbReference type="RefSeq" id="XP_955601.1">
    <property type="nucleotide sequence ID" value="XM_950508.1"/>
</dbReference>
<dbReference type="SMR" id="Q8SQP2"/>
<dbReference type="FunCoup" id="Q8SQP2">
    <property type="interactions" value="349"/>
</dbReference>
<dbReference type="STRING" id="284813.Q8SQP2"/>
<dbReference type="VEuPathDB" id="MicrosporidiaDB:ECU09_0480"/>
<dbReference type="HOGENOM" id="CLU_008891_6_2_1"/>
<dbReference type="InParanoid" id="Q8SQP2"/>
<dbReference type="OMA" id="CAEMVMS"/>
<dbReference type="OrthoDB" id="10248520at2759"/>
<dbReference type="Proteomes" id="UP000000819">
    <property type="component" value="Chromosome IX"/>
</dbReference>
<dbReference type="GO" id="GO:0005832">
    <property type="term" value="C:chaperonin-containing T-complex"/>
    <property type="evidence" value="ECO:0007669"/>
    <property type="project" value="InterPro"/>
</dbReference>
<dbReference type="GO" id="GO:0005524">
    <property type="term" value="F:ATP binding"/>
    <property type="evidence" value="ECO:0007669"/>
    <property type="project" value="UniProtKB-KW"/>
</dbReference>
<dbReference type="GO" id="GO:0016887">
    <property type="term" value="F:ATP hydrolysis activity"/>
    <property type="evidence" value="ECO:0007669"/>
    <property type="project" value="InterPro"/>
</dbReference>
<dbReference type="GO" id="GO:0140662">
    <property type="term" value="F:ATP-dependent protein folding chaperone"/>
    <property type="evidence" value="ECO:0007669"/>
    <property type="project" value="InterPro"/>
</dbReference>
<dbReference type="GO" id="GO:0051082">
    <property type="term" value="F:unfolded protein binding"/>
    <property type="evidence" value="ECO:0007669"/>
    <property type="project" value="InterPro"/>
</dbReference>
<dbReference type="CDD" id="cd03336">
    <property type="entry name" value="TCP1_beta"/>
    <property type="match status" value="1"/>
</dbReference>
<dbReference type="Gene3D" id="3.50.7.10">
    <property type="entry name" value="GroEL"/>
    <property type="match status" value="1"/>
</dbReference>
<dbReference type="Gene3D" id="1.10.560.10">
    <property type="entry name" value="GroEL-like equatorial domain"/>
    <property type="match status" value="1"/>
</dbReference>
<dbReference type="Gene3D" id="3.30.260.10">
    <property type="entry name" value="TCP-1-like chaperonin intermediate domain"/>
    <property type="match status" value="1"/>
</dbReference>
<dbReference type="InterPro" id="IPR012716">
    <property type="entry name" value="Chap_CCT_beta"/>
</dbReference>
<dbReference type="InterPro" id="IPR017998">
    <property type="entry name" value="Chaperone_TCP-1"/>
</dbReference>
<dbReference type="InterPro" id="IPR002194">
    <property type="entry name" value="Chaperonin_TCP-1_CS"/>
</dbReference>
<dbReference type="InterPro" id="IPR002423">
    <property type="entry name" value="Cpn60/GroEL/TCP-1"/>
</dbReference>
<dbReference type="InterPro" id="IPR027409">
    <property type="entry name" value="GroEL-like_apical_dom_sf"/>
</dbReference>
<dbReference type="InterPro" id="IPR027413">
    <property type="entry name" value="GROEL-like_equatorial_sf"/>
</dbReference>
<dbReference type="InterPro" id="IPR027410">
    <property type="entry name" value="TCP-1-like_intermed_sf"/>
</dbReference>
<dbReference type="NCBIfam" id="TIGR02341">
    <property type="entry name" value="chap_CCT_beta"/>
    <property type="match status" value="1"/>
</dbReference>
<dbReference type="PANTHER" id="PTHR11353">
    <property type="entry name" value="CHAPERONIN"/>
    <property type="match status" value="1"/>
</dbReference>
<dbReference type="Pfam" id="PF00118">
    <property type="entry name" value="Cpn60_TCP1"/>
    <property type="match status" value="1"/>
</dbReference>
<dbReference type="PRINTS" id="PR00304">
    <property type="entry name" value="TCOMPLEXTCP1"/>
</dbReference>
<dbReference type="SUPFAM" id="SSF52029">
    <property type="entry name" value="GroEL apical domain-like"/>
    <property type="match status" value="1"/>
</dbReference>
<dbReference type="SUPFAM" id="SSF48592">
    <property type="entry name" value="GroEL equatorial domain-like"/>
    <property type="match status" value="1"/>
</dbReference>
<dbReference type="SUPFAM" id="SSF54849">
    <property type="entry name" value="GroEL-intermediate domain like"/>
    <property type="match status" value="1"/>
</dbReference>
<dbReference type="PROSITE" id="PS00750">
    <property type="entry name" value="TCP1_1"/>
    <property type="match status" value="1"/>
</dbReference>
<reference key="1">
    <citation type="journal article" date="2001" name="Nature">
        <title>Genome sequence and gene compaction of the eukaryote parasite Encephalitozoon cuniculi.</title>
        <authorList>
            <person name="Katinka M.D."/>
            <person name="Duprat S."/>
            <person name="Cornillot E."/>
            <person name="Metenier G."/>
            <person name="Thomarat F."/>
            <person name="Prensier G."/>
            <person name="Barbe V."/>
            <person name="Peyretaillade E."/>
            <person name="Brottier P."/>
            <person name="Wincker P."/>
            <person name="Delbac F."/>
            <person name="El Alaoui H."/>
            <person name="Peyret P."/>
            <person name="Saurin W."/>
            <person name="Gouy M."/>
            <person name="Weissenbach J."/>
            <person name="Vivares C.P."/>
        </authorList>
    </citation>
    <scope>NUCLEOTIDE SEQUENCE [LARGE SCALE GENOMIC DNA]</scope>
    <source>
        <strain>GB-M1</strain>
    </source>
</reference>
<reference key="2">
    <citation type="journal article" date="2006" name="Proteomics">
        <title>Proteomic analysis of the eukaryotic parasite Encephalitozoon cuniculi (microsporidia): a reference map for proteins expressed in late sporogonial stages.</title>
        <authorList>
            <person name="Brosson D."/>
            <person name="Kuhn L."/>
            <person name="Delbac F."/>
            <person name="Garin J."/>
            <person name="Vivares C.P."/>
            <person name="Texier C."/>
        </authorList>
    </citation>
    <scope>IDENTIFICATION BY MASS SPECTROMETRY [LARGE SCALE ANALYSIS]</scope>
    <scope>DEVELOPMENTAL STAGE</scope>
</reference>
<organism>
    <name type="scientific">Encephalitozoon cuniculi (strain GB-M1)</name>
    <name type="common">Microsporidian parasite</name>
    <dbReference type="NCBI Taxonomy" id="284813"/>
    <lineage>
        <taxon>Eukaryota</taxon>
        <taxon>Fungi</taxon>
        <taxon>Fungi incertae sedis</taxon>
        <taxon>Microsporidia</taxon>
        <taxon>Unikaryonidae</taxon>
        <taxon>Encephalitozoon</taxon>
    </lineage>
</organism>
<gene>
    <name type="primary">CCT2</name>
    <name type="ordered locus">ECU09_0480</name>
</gene>
<keyword id="KW-0067">ATP-binding</keyword>
<keyword id="KW-0143">Chaperone</keyword>
<keyword id="KW-0963">Cytoplasm</keyword>
<keyword id="KW-0547">Nucleotide-binding</keyword>
<keyword id="KW-1185">Reference proteome</keyword>
<feature type="chain" id="PRO_0000378554" description="T-complex protein 1 subunit beta">
    <location>
        <begin position="1"/>
        <end position="508"/>
    </location>
</feature>